<evidence type="ECO:0000255" key="1">
    <source>
        <dbReference type="HAMAP-Rule" id="MF_00375"/>
    </source>
</evidence>
<dbReference type="EC" id="5.4.3.8" evidence="1"/>
<dbReference type="EMBL" id="AM286690">
    <property type="protein sequence ID" value="CAL15802.1"/>
    <property type="molecule type" value="Genomic_DNA"/>
</dbReference>
<dbReference type="RefSeq" id="WP_011587649.1">
    <property type="nucleotide sequence ID" value="NC_008260.1"/>
</dbReference>
<dbReference type="SMR" id="Q0VSP6"/>
<dbReference type="STRING" id="393595.ABO_0354"/>
<dbReference type="KEGG" id="abo:ABO_0354"/>
<dbReference type="eggNOG" id="COG0001">
    <property type="taxonomic scope" value="Bacteria"/>
</dbReference>
<dbReference type="HOGENOM" id="CLU_016922_1_5_6"/>
<dbReference type="OrthoDB" id="9801052at2"/>
<dbReference type="UniPathway" id="UPA00251">
    <property type="reaction ID" value="UER00317"/>
</dbReference>
<dbReference type="Proteomes" id="UP000008871">
    <property type="component" value="Chromosome"/>
</dbReference>
<dbReference type="GO" id="GO:0005737">
    <property type="term" value="C:cytoplasm"/>
    <property type="evidence" value="ECO:0007669"/>
    <property type="project" value="UniProtKB-SubCell"/>
</dbReference>
<dbReference type="GO" id="GO:0042286">
    <property type="term" value="F:glutamate-1-semialdehyde 2,1-aminomutase activity"/>
    <property type="evidence" value="ECO:0007669"/>
    <property type="project" value="UniProtKB-UniRule"/>
</dbReference>
<dbReference type="GO" id="GO:0030170">
    <property type="term" value="F:pyridoxal phosphate binding"/>
    <property type="evidence" value="ECO:0007669"/>
    <property type="project" value="InterPro"/>
</dbReference>
<dbReference type="GO" id="GO:0008483">
    <property type="term" value="F:transaminase activity"/>
    <property type="evidence" value="ECO:0007669"/>
    <property type="project" value="InterPro"/>
</dbReference>
<dbReference type="GO" id="GO:0006782">
    <property type="term" value="P:protoporphyrinogen IX biosynthetic process"/>
    <property type="evidence" value="ECO:0007669"/>
    <property type="project" value="UniProtKB-UniRule"/>
</dbReference>
<dbReference type="CDD" id="cd00610">
    <property type="entry name" value="OAT_like"/>
    <property type="match status" value="1"/>
</dbReference>
<dbReference type="FunFam" id="3.40.640.10:FF:000021">
    <property type="entry name" value="Glutamate-1-semialdehyde 2,1-aminomutase"/>
    <property type="match status" value="1"/>
</dbReference>
<dbReference type="Gene3D" id="3.90.1150.10">
    <property type="entry name" value="Aspartate Aminotransferase, domain 1"/>
    <property type="match status" value="1"/>
</dbReference>
<dbReference type="Gene3D" id="3.40.640.10">
    <property type="entry name" value="Type I PLP-dependent aspartate aminotransferase-like (Major domain)"/>
    <property type="match status" value="1"/>
</dbReference>
<dbReference type="HAMAP" id="MF_00375">
    <property type="entry name" value="HemL_aminotrans_3"/>
    <property type="match status" value="1"/>
</dbReference>
<dbReference type="InterPro" id="IPR004639">
    <property type="entry name" value="4pyrrol_synth_GluAld_NH2Trfase"/>
</dbReference>
<dbReference type="InterPro" id="IPR005814">
    <property type="entry name" value="Aminotrans_3"/>
</dbReference>
<dbReference type="InterPro" id="IPR049704">
    <property type="entry name" value="Aminotrans_3_PPA_site"/>
</dbReference>
<dbReference type="InterPro" id="IPR015424">
    <property type="entry name" value="PyrdxlP-dep_Trfase"/>
</dbReference>
<dbReference type="InterPro" id="IPR015421">
    <property type="entry name" value="PyrdxlP-dep_Trfase_major"/>
</dbReference>
<dbReference type="InterPro" id="IPR015422">
    <property type="entry name" value="PyrdxlP-dep_Trfase_small"/>
</dbReference>
<dbReference type="NCBIfam" id="TIGR00713">
    <property type="entry name" value="hemL"/>
    <property type="match status" value="1"/>
</dbReference>
<dbReference type="NCBIfam" id="NF000818">
    <property type="entry name" value="PRK00062.1"/>
    <property type="match status" value="1"/>
</dbReference>
<dbReference type="PANTHER" id="PTHR43713">
    <property type="entry name" value="GLUTAMATE-1-SEMIALDEHYDE 2,1-AMINOMUTASE"/>
    <property type="match status" value="1"/>
</dbReference>
<dbReference type="PANTHER" id="PTHR43713:SF3">
    <property type="entry name" value="GLUTAMATE-1-SEMIALDEHYDE 2,1-AMINOMUTASE 1, CHLOROPLASTIC-RELATED"/>
    <property type="match status" value="1"/>
</dbReference>
<dbReference type="Pfam" id="PF00202">
    <property type="entry name" value="Aminotran_3"/>
    <property type="match status" value="1"/>
</dbReference>
<dbReference type="SUPFAM" id="SSF53383">
    <property type="entry name" value="PLP-dependent transferases"/>
    <property type="match status" value="1"/>
</dbReference>
<dbReference type="PROSITE" id="PS00600">
    <property type="entry name" value="AA_TRANSFER_CLASS_3"/>
    <property type="match status" value="1"/>
</dbReference>
<sequence>MPRKHSEQLFRQAQKHIPGGVNSPVRAFKSVGGTPVFFHSARGAHLFDEDDNKYIDYVGSWGPMILGHNHPHVVAAVQAAVEQGLSFGAPTATEVAMADKVCELVPSMDMVRMVNSGTEATMSAIRLARGYTGRNKIIKFEGCYHGHVDSLLVKAGSGAIAIPGSPGVPEAVTADTLVLDYNDAASVTQAFKEHGDDIAAVIVEPVAGNMNCVPATENFLQTLRQQCDDNGAVLIFDEVMSGFRVALGGAQGHYGITPDMTTLGKIVGGGMPVGAFGGKQAIMEHLAPLGPVYQAGTLSGNPVAMAAGLATLNLISEPGFHQALAEKTTRLLEGLTAAAHAEGVAFTTAQAGAMFGLFFTDQNRISSFTEVMACDSERFNRFFHAMLDQGIYLAPSAFEAGFVSAAHSNDDIDATITAARKAFGKI</sequence>
<gene>
    <name evidence="1" type="primary">hemL</name>
    <name type="ordered locus">ABO_0354</name>
</gene>
<reference key="1">
    <citation type="journal article" date="2006" name="Nat. Biotechnol.">
        <title>Genome sequence of the ubiquitous hydrocarbon-degrading marine bacterium Alcanivorax borkumensis.</title>
        <authorList>
            <person name="Schneiker S."/>
            <person name="Martins dos Santos V.A.P."/>
            <person name="Bartels D."/>
            <person name="Bekel T."/>
            <person name="Brecht M."/>
            <person name="Buhrmester J."/>
            <person name="Chernikova T.N."/>
            <person name="Denaro R."/>
            <person name="Ferrer M."/>
            <person name="Gertler C."/>
            <person name="Goesmann A."/>
            <person name="Golyshina O.V."/>
            <person name="Kaminski F."/>
            <person name="Khachane A.N."/>
            <person name="Lang S."/>
            <person name="Linke B."/>
            <person name="McHardy A.C."/>
            <person name="Meyer F."/>
            <person name="Nechitaylo T."/>
            <person name="Puehler A."/>
            <person name="Regenhardt D."/>
            <person name="Rupp O."/>
            <person name="Sabirova J.S."/>
            <person name="Selbitschka W."/>
            <person name="Yakimov M.M."/>
            <person name="Timmis K.N."/>
            <person name="Vorhoelter F.-J."/>
            <person name="Weidner S."/>
            <person name="Kaiser O."/>
            <person name="Golyshin P.N."/>
        </authorList>
    </citation>
    <scope>NUCLEOTIDE SEQUENCE [LARGE SCALE GENOMIC DNA]</scope>
    <source>
        <strain>ATCC 700651 / DSM 11573 / NCIMB 13689 / SK2</strain>
    </source>
</reference>
<accession>Q0VSP6</accession>
<keyword id="KW-0963">Cytoplasm</keyword>
<keyword id="KW-0413">Isomerase</keyword>
<keyword id="KW-0627">Porphyrin biosynthesis</keyword>
<keyword id="KW-0663">Pyridoxal phosphate</keyword>
<keyword id="KW-1185">Reference proteome</keyword>
<protein>
    <recommendedName>
        <fullName evidence="1">Glutamate-1-semialdehyde 2,1-aminomutase</fullName>
        <shortName evidence="1">GSA</shortName>
        <ecNumber evidence="1">5.4.3.8</ecNumber>
    </recommendedName>
    <alternativeName>
        <fullName evidence="1">Glutamate-1-semialdehyde aminotransferase</fullName>
        <shortName evidence="1">GSA-AT</shortName>
    </alternativeName>
</protein>
<organism>
    <name type="scientific">Alcanivorax borkumensis (strain ATCC 700651 / DSM 11573 / NCIMB 13689 / SK2)</name>
    <dbReference type="NCBI Taxonomy" id="393595"/>
    <lineage>
        <taxon>Bacteria</taxon>
        <taxon>Pseudomonadati</taxon>
        <taxon>Pseudomonadota</taxon>
        <taxon>Gammaproteobacteria</taxon>
        <taxon>Oceanospirillales</taxon>
        <taxon>Alcanivoracaceae</taxon>
        <taxon>Alcanivorax</taxon>
    </lineage>
</organism>
<proteinExistence type="inferred from homology"/>
<name>GSA_ALCBS</name>
<feature type="chain" id="PRO_0000382246" description="Glutamate-1-semialdehyde 2,1-aminomutase">
    <location>
        <begin position="1"/>
        <end position="426"/>
    </location>
</feature>
<feature type="modified residue" description="N6-(pyridoxal phosphate)lysine" evidence="1">
    <location>
        <position position="265"/>
    </location>
</feature>
<comment type="catalytic activity">
    <reaction evidence="1">
        <text>(S)-4-amino-5-oxopentanoate = 5-aminolevulinate</text>
        <dbReference type="Rhea" id="RHEA:14265"/>
        <dbReference type="ChEBI" id="CHEBI:57501"/>
        <dbReference type="ChEBI" id="CHEBI:356416"/>
        <dbReference type="EC" id="5.4.3.8"/>
    </reaction>
</comment>
<comment type="cofactor">
    <cofactor evidence="1">
        <name>pyridoxal 5'-phosphate</name>
        <dbReference type="ChEBI" id="CHEBI:597326"/>
    </cofactor>
</comment>
<comment type="pathway">
    <text evidence="1">Porphyrin-containing compound metabolism; protoporphyrin-IX biosynthesis; 5-aminolevulinate from L-glutamyl-tRNA(Glu): step 2/2.</text>
</comment>
<comment type="subunit">
    <text evidence="1">Homodimer.</text>
</comment>
<comment type="subcellular location">
    <subcellularLocation>
        <location evidence="1">Cytoplasm</location>
    </subcellularLocation>
</comment>
<comment type="similarity">
    <text evidence="1">Belongs to the class-III pyridoxal-phosphate-dependent aminotransferase family. HemL subfamily.</text>
</comment>